<keyword id="KW-0002">3D-structure</keyword>
<keyword id="KW-0045">Antibiotic biosynthesis</keyword>
<keyword id="KW-0067">ATP-binding</keyword>
<keyword id="KW-0413">Isomerase</keyword>
<keyword id="KW-0436">Ligase</keyword>
<keyword id="KW-0511">Multifunctional enzyme</keyword>
<keyword id="KW-0547">Nucleotide-binding</keyword>
<keyword id="KW-0596">Phosphopantetheine</keyword>
<keyword id="KW-0597">Phosphoprotein</keyword>
<evidence type="ECO:0000250" key="1"/>
<evidence type="ECO:0000255" key="2">
    <source>
        <dbReference type="PROSITE-ProRule" id="PRU00258"/>
    </source>
</evidence>
<evidence type="ECO:0000305" key="3"/>
<evidence type="ECO:0007829" key="4">
    <source>
        <dbReference type="PDB" id="5ISW"/>
    </source>
</evidence>
<evidence type="ECO:0007829" key="5">
    <source>
        <dbReference type="PDB" id="5ISX"/>
    </source>
</evidence>
<dbReference type="EC" id="5.1.1.11"/>
<dbReference type="EMBL" id="D00519">
    <property type="protein sequence ID" value="BAA00406.1"/>
    <property type="molecule type" value="Genomic_DNA"/>
</dbReference>
<dbReference type="EMBL" id="D00938">
    <property type="protein sequence ID" value="BAA00777.1"/>
    <property type="molecule type" value="Genomic_DNA"/>
</dbReference>
<dbReference type="PIR" id="JU0122">
    <property type="entry name" value="YGBSG1"/>
</dbReference>
<dbReference type="PDB" id="5ISW">
    <property type="method" value="X-ray"/>
    <property type="resolution" value="1.75 A"/>
    <property type="chains" value="A=538-1098"/>
</dbReference>
<dbReference type="PDB" id="5ISX">
    <property type="method" value="X-ray"/>
    <property type="resolution" value="2.33 A"/>
    <property type="chains" value="A/B=538-1098"/>
</dbReference>
<dbReference type="PDBsum" id="5ISW"/>
<dbReference type="PDBsum" id="5ISX"/>
<dbReference type="SMR" id="P0C062"/>
<dbReference type="KEGG" id="ag:BAA00406"/>
<dbReference type="BRENDA" id="5.1.1.11">
    <property type="organism ID" value="638"/>
</dbReference>
<dbReference type="SABIO-RK" id="P0C062"/>
<dbReference type="UniPathway" id="UPA00102"/>
<dbReference type="EvolutionaryTrace" id="P0C062"/>
<dbReference type="GO" id="GO:0005524">
    <property type="term" value="F:ATP binding"/>
    <property type="evidence" value="ECO:0007669"/>
    <property type="project" value="UniProtKB-KW"/>
</dbReference>
<dbReference type="GO" id="GO:0016874">
    <property type="term" value="F:ligase activity"/>
    <property type="evidence" value="ECO:0007669"/>
    <property type="project" value="UniProtKB-KW"/>
</dbReference>
<dbReference type="GO" id="GO:0047462">
    <property type="term" value="F:phenylalanine racemase (ATP-hydrolyzing) activity"/>
    <property type="evidence" value="ECO:0007669"/>
    <property type="project" value="UniProtKB-EC"/>
</dbReference>
<dbReference type="GO" id="GO:0017000">
    <property type="term" value="P:antibiotic biosynthetic process"/>
    <property type="evidence" value="ECO:0007669"/>
    <property type="project" value="UniProtKB-KW"/>
</dbReference>
<dbReference type="GO" id="GO:0008610">
    <property type="term" value="P:lipid biosynthetic process"/>
    <property type="evidence" value="ECO:0007669"/>
    <property type="project" value="UniProtKB-ARBA"/>
</dbReference>
<dbReference type="CDD" id="cd17655">
    <property type="entry name" value="A_NRPS_Bac"/>
    <property type="match status" value="1"/>
</dbReference>
<dbReference type="CDD" id="cd19534">
    <property type="entry name" value="E_NRPS"/>
    <property type="match status" value="1"/>
</dbReference>
<dbReference type="FunFam" id="3.40.50.12780:FF:000012">
    <property type="entry name" value="Non-ribosomal peptide synthetase"/>
    <property type="match status" value="1"/>
</dbReference>
<dbReference type="FunFam" id="3.40.50.980:FF:000001">
    <property type="entry name" value="Non-ribosomal peptide synthetase"/>
    <property type="match status" value="1"/>
</dbReference>
<dbReference type="FunFam" id="2.30.38.10:FF:000001">
    <property type="entry name" value="Non-ribosomal peptide synthetase PvdI"/>
    <property type="match status" value="1"/>
</dbReference>
<dbReference type="FunFam" id="1.10.1200.10:FF:000005">
    <property type="entry name" value="Nonribosomal peptide synthetase 1"/>
    <property type="match status" value="1"/>
</dbReference>
<dbReference type="Gene3D" id="3.30.300.30">
    <property type="match status" value="1"/>
</dbReference>
<dbReference type="Gene3D" id="3.40.50.980">
    <property type="match status" value="2"/>
</dbReference>
<dbReference type="Gene3D" id="1.10.1200.10">
    <property type="entry name" value="ACP-like"/>
    <property type="match status" value="1"/>
</dbReference>
<dbReference type="Gene3D" id="3.30.559.10">
    <property type="entry name" value="Chloramphenicol acetyltransferase-like domain"/>
    <property type="match status" value="1"/>
</dbReference>
<dbReference type="Gene3D" id="2.30.38.10">
    <property type="entry name" value="Luciferase, Domain 3"/>
    <property type="match status" value="1"/>
</dbReference>
<dbReference type="Gene3D" id="3.30.559.30">
    <property type="entry name" value="Nonribosomal peptide synthetase, condensation domain"/>
    <property type="match status" value="1"/>
</dbReference>
<dbReference type="InterPro" id="IPR010071">
    <property type="entry name" value="AA_adenyl_dom"/>
</dbReference>
<dbReference type="InterPro" id="IPR036736">
    <property type="entry name" value="ACP-like_sf"/>
</dbReference>
<dbReference type="InterPro" id="IPR025110">
    <property type="entry name" value="AMP-bd_C"/>
</dbReference>
<dbReference type="InterPro" id="IPR045851">
    <property type="entry name" value="AMP-bd_C_sf"/>
</dbReference>
<dbReference type="InterPro" id="IPR020845">
    <property type="entry name" value="AMP-binding_CS"/>
</dbReference>
<dbReference type="InterPro" id="IPR000873">
    <property type="entry name" value="AMP-dep_synth/lig_dom"/>
</dbReference>
<dbReference type="InterPro" id="IPR023213">
    <property type="entry name" value="CAT-like_dom_sf"/>
</dbReference>
<dbReference type="InterPro" id="IPR001242">
    <property type="entry name" value="Condensatn"/>
</dbReference>
<dbReference type="InterPro" id="IPR010060">
    <property type="entry name" value="NRPS_synth"/>
</dbReference>
<dbReference type="InterPro" id="IPR009081">
    <property type="entry name" value="PP-bd_ACP"/>
</dbReference>
<dbReference type="InterPro" id="IPR006162">
    <property type="entry name" value="Ppantetheine_attach_site"/>
</dbReference>
<dbReference type="NCBIfam" id="TIGR01733">
    <property type="entry name" value="AA-adenyl-dom"/>
    <property type="match status" value="1"/>
</dbReference>
<dbReference type="NCBIfam" id="TIGR01720">
    <property type="entry name" value="NRPS-para261"/>
    <property type="match status" value="1"/>
</dbReference>
<dbReference type="PANTHER" id="PTHR45398">
    <property type="match status" value="1"/>
</dbReference>
<dbReference type="PANTHER" id="PTHR45398:SF1">
    <property type="entry name" value="ENZYME, PUTATIVE (JCVI)-RELATED"/>
    <property type="match status" value="1"/>
</dbReference>
<dbReference type="Pfam" id="PF00501">
    <property type="entry name" value="AMP-binding"/>
    <property type="match status" value="1"/>
</dbReference>
<dbReference type="Pfam" id="PF13193">
    <property type="entry name" value="AMP-binding_C"/>
    <property type="match status" value="1"/>
</dbReference>
<dbReference type="Pfam" id="PF00668">
    <property type="entry name" value="Condensation"/>
    <property type="match status" value="1"/>
</dbReference>
<dbReference type="Pfam" id="PF00550">
    <property type="entry name" value="PP-binding"/>
    <property type="match status" value="1"/>
</dbReference>
<dbReference type="SUPFAM" id="SSF56801">
    <property type="entry name" value="Acetyl-CoA synthetase-like"/>
    <property type="match status" value="1"/>
</dbReference>
<dbReference type="SUPFAM" id="SSF47336">
    <property type="entry name" value="ACP-like"/>
    <property type="match status" value="1"/>
</dbReference>
<dbReference type="SUPFAM" id="SSF52777">
    <property type="entry name" value="CoA-dependent acyltransferases"/>
    <property type="match status" value="2"/>
</dbReference>
<dbReference type="PROSITE" id="PS00455">
    <property type="entry name" value="AMP_BINDING"/>
    <property type="match status" value="1"/>
</dbReference>
<dbReference type="PROSITE" id="PS50075">
    <property type="entry name" value="CARRIER"/>
    <property type="match status" value="1"/>
</dbReference>
<dbReference type="PROSITE" id="PS00012">
    <property type="entry name" value="PHOSPHOPANTETHEINE"/>
    <property type="match status" value="1"/>
</dbReference>
<name>GRSA_BREBE</name>
<proteinExistence type="evidence at protein level"/>
<reference key="1">
    <citation type="journal article" date="1989" name="J. Biochem.">
        <title>Molecular cloning and nucleotide sequence of the gramicidin S synthetase 1 gene.</title>
        <authorList>
            <person name="Hori K."/>
            <person name="Yamamoto Y."/>
            <person name="Minetoki T."/>
            <person name="Kurotsu T."/>
            <person name="Kanda M."/>
            <person name="Miura S."/>
            <person name="Okamura K."/>
            <person name="Furuyama J."/>
            <person name="Saito Y."/>
        </authorList>
    </citation>
    <scope>NUCLEOTIDE SEQUENCE [GENOMIC DNA]</scope>
    <source>
        <strain>Nagano</strain>
    </source>
</reference>
<gene>
    <name type="primary">grsA</name>
    <name type="synonym">grs1</name>
</gene>
<comment type="function">
    <text evidence="1">In the first step of peptide synthesis this enzyme activates phenylalanine and racemizes it to the D-isomer.</text>
</comment>
<comment type="catalytic activity">
    <reaction>
        <text>L-phenylalanine + ATP + H2O = D-phenylalanine + AMP + diphosphate + H(+)</text>
        <dbReference type="Rhea" id="RHEA:20201"/>
        <dbReference type="ChEBI" id="CHEBI:15377"/>
        <dbReference type="ChEBI" id="CHEBI:15378"/>
        <dbReference type="ChEBI" id="CHEBI:30616"/>
        <dbReference type="ChEBI" id="CHEBI:33019"/>
        <dbReference type="ChEBI" id="CHEBI:57981"/>
        <dbReference type="ChEBI" id="CHEBI:58095"/>
        <dbReference type="ChEBI" id="CHEBI:456215"/>
        <dbReference type="EC" id="5.1.1.11"/>
    </reaction>
</comment>
<comment type="cofactor">
    <cofactor evidence="1">
        <name>pantetheine 4'-phosphate</name>
        <dbReference type="ChEBI" id="CHEBI:47942"/>
    </cofactor>
    <text evidence="1">Binds 1 phosphopantetheine covalently.</text>
</comment>
<comment type="pathway">
    <text>Antibiotic biosynthesis; gramicidin S biosynthesis.</text>
</comment>
<comment type="subunit">
    <text evidence="1">Large multienzyme complex of GrsA and GrsB.</text>
</comment>
<comment type="domain">
    <text evidence="1">One-module-bearing peptide synthase with a C-terminal epimerization domain. Each module incorporates one amino acid into the peptide product and can be further subdivided into domains responsible for substrate adenylation, thiolation, condensation (not for the initiation module), and epimerization (optional), and N methylation (optional) (By similarity).</text>
</comment>
<comment type="miscellaneous">
    <text evidence="1">The racemization reaction takes place in the thioester-bound stage of phenylalanine that is formed via the thiol group of the serine-bound phosphopantetheine.</text>
</comment>
<comment type="similarity">
    <text evidence="3">Belongs to the ATP-dependent AMP-binding enzyme family.</text>
</comment>
<sequence length="1098" mass="126566">MLNSSKSILIHAQNKNGTHEEEQYLFAVNNTKAEYPRDKTIHQLFEEQVSKRPNNVAIVCENEQLTYHELNVKANQLARIFIEKGIGKDTLVGIMMEKSIDLFIGILAVLKAGGAYVPIDIEYPKERIQYILDDSQARMLLTQKHLVHLIHNIQFNGQVEIFEEDTIKIREGTNLHVPSKSTDLAYVIYTSGTTGNPKGTMLEHKGISNLKVFFENSLNVTEKDRIGQFASISFDASVWEMFMALLTGASLYIILKDTINDFVKFEQYINQKEITVITLPPTYVVHLDPERILSIQTLITAGSATSPSLVNKWKEKVTYINAYGPTETTICATTWVATKETTGHSVPIGAPIQNTQIYIVDENLQLKSVGEAGELCIGGEGLARGYWKRPELTSQKFVDNPFVPGEKLYKTGDQARWLPDGNIEYLGRIDNQVKIRGHRVELEEVESILLKHMYISETAVSVHKDHQEQPYLCAIFVSEKHIPLEQLRQFSSEELPTYMIPSYFIQLDKMPLTSNGKIDRKQLPEPDLTFGMRVDYEAPRNEIEETLVTIWQDVLGIEKIGIKDNFYALGGDSIKAIQVAARLHSYQLKLETKDLLKYPTIDQLVHYIKDSKRRSEQGIVEGEIGLTPIQHWFFEQQFTNMHHWNQSYMLYRPNGFDKEILLRVFNKIVEHHDALRMIYKHHNGKIVQINRGLEGTLFDFYTFDLTANDNEQQVICEESARLQNSINLEVGPLVKIALFHTQNGDHLFMAIHHLVVDGISWRILFEDLATAYEQAMHQQTIALPEKTDSFKDWSIELEKYANSELFLEEAEYWHHLNYYTDNVQIKKDYVTMNNKQKNIRYVGMELTIEETEKLLKNVNKAYRTEINDILLTALGFALKEWADIDKIVINLEGHGREEILEQMNIARTVGWFTSQYPVVLDMQKSDDLSYQIKLMKENLRRIPNKGIGYEIFKYLTTEYLRPVLPFTLKPEINFNYLGQFDTDVKTELFTRSPYSMGNSLGPDGKNNLSPEGESYFVLNINGFIEEGKLHITFSYNEQQYKEDTIQQLSRSYKQHLLAIIEHCVQKEDTELTPSDFSFKELELEEMDDIFDLLADSLT</sequence>
<organism>
    <name type="scientific">Brevibacillus brevis</name>
    <name type="common">Bacillus brevis</name>
    <dbReference type="NCBI Taxonomy" id="1393"/>
    <lineage>
        <taxon>Bacteria</taxon>
        <taxon>Bacillati</taxon>
        <taxon>Bacillota</taxon>
        <taxon>Bacilli</taxon>
        <taxon>Bacillales</taxon>
        <taxon>Paenibacillaceae</taxon>
        <taxon>Brevibacillus</taxon>
    </lineage>
</organism>
<protein>
    <recommendedName>
        <fullName>Gramicidin S synthase 1</fullName>
    </recommendedName>
    <alternativeName>
        <fullName>Gramicidin S synthase I</fullName>
    </alternativeName>
    <domain>
        <recommendedName>
            <fullName>ATP-dependent D-phenylalanine adenylase</fullName>
            <shortName>D-PheA</shortName>
        </recommendedName>
        <alternativeName>
            <fullName>D-phenylalanine activase</fullName>
        </alternativeName>
    </domain>
    <domain>
        <recommendedName>
            <fullName>Phenylalanine racemase [ATP-hydrolyzing]</fullName>
            <ecNumber>5.1.1.11</ecNumber>
        </recommendedName>
    </domain>
</protein>
<feature type="chain" id="PRO_0000193086" description="Gramicidin S synthase 1">
    <location>
        <begin position="1"/>
        <end position="1098"/>
    </location>
</feature>
<feature type="domain" description="Carrier" evidence="2">
    <location>
        <begin position="538"/>
        <end position="612"/>
    </location>
</feature>
<feature type="modified residue" description="O-(pantetheine 4'-phosphoryl)serine" evidence="2">
    <location>
        <position position="573"/>
    </location>
</feature>
<feature type="helix" evidence="4">
    <location>
        <begin position="540"/>
        <end position="555"/>
    </location>
</feature>
<feature type="turn" evidence="4">
    <location>
        <begin position="566"/>
        <end position="570"/>
    </location>
</feature>
<feature type="helix" evidence="4">
    <location>
        <begin position="573"/>
        <end position="584"/>
    </location>
</feature>
<feature type="turn" evidence="4">
    <location>
        <begin position="585"/>
        <end position="587"/>
    </location>
</feature>
<feature type="helix" evidence="4">
    <location>
        <begin position="592"/>
        <end position="597"/>
    </location>
</feature>
<feature type="helix" evidence="4">
    <location>
        <begin position="601"/>
        <end position="604"/>
    </location>
</feature>
<feature type="helix" evidence="4">
    <location>
        <begin position="605"/>
        <end position="607"/>
    </location>
</feature>
<feature type="strand" evidence="4">
    <location>
        <begin position="622"/>
        <end position="624"/>
    </location>
</feature>
<feature type="helix" evidence="4">
    <location>
        <begin position="628"/>
        <end position="636"/>
    </location>
</feature>
<feature type="turn" evidence="4">
    <location>
        <begin position="639"/>
        <end position="642"/>
    </location>
</feature>
<feature type="strand" evidence="4">
    <location>
        <begin position="644"/>
        <end position="652"/>
    </location>
</feature>
<feature type="helix" evidence="4">
    <location>
        <begin position="658"/>
        <end position="671"/>
    </location>
</feature>
<feature type="helix" evidence="4">
    <location>
        <begin position="673"/>
        <end position="676"/>
    </location>
</feature>
<feature type="strand" evidence="4">
    <location>
        <begin position="677"/>
        <end position="682"/>
    </location>
</feature>
<feature type="strand" evidence="4">
    <location>
        <begin position="685"/>
        <end position="690"/>
    </location>
</feature>
<feature type="strand" evidence="4">
    <location>
        <begin position="699"/>
        <end position="704"/>
    </location>
</feature>
<feature type="helix" evidence="4">
    <location>
        <begin position="711"/>
        <end position="723"/>
    </location>
</feature>
<feature type="turn" evidence="4">
    <location>
        <begin position="728"/>
        <end position="730"/>
    </location>
</feature>
<feature type="strand" evidence="4">
    <location>
        <begin position="734"/>
        <end position="741"/>
    </location>
</feature>
<feature type="strand" evidence="4">
    <location>
        <begin position="744"/>
        <end position="752"/>
    </location>
</feature>
<feature type="helix" evidence="4">
    <location>
        <begin position="753"/>
        <end position="755"/>
    </location>
</feature>
<feature type="helix" evidence="4">
    <location>
        <begin position="758"/>
        <end position="776"/>
    </location>
</feature>
<feature type="helix" evidence="4">
    <location>
        <begin position="790"/>
        <end position="800"/>
    </location>
</feature>
<feature type="helix" evidence="4">
    <location>
        <begin position="804"/>
        <end position="807"/>
    </location>
</feature>
<feature type="helix" evidence="4">
    <location>
        <begin position="808"/>
        <end position="818"/>
    </location>
</feature>
<feature type="helix" evidence="4">
    <location>
        <begin position="836"/>
        <end position="838"/>
    </location>
</feature>
<feature type="strand" evidence="4">
    <location>
        <begin position="839"/>
        <end position="845"/>
    </location>
</feature>
<feature type="helix" evidence="4">
    <location>
        <begin position="848"/>
        <end position="856"/>
    </location>
</feature>
<feature type="turn" evidence="4">
    <location>
        <begin position="859"/>
        <end position="863"/>
    </location>
</feature>
<feature type="helix" evidence="4">
    <location>
        <begin position="866"/>
        <end position="882"/>
    </location>
</feature>
<feature type="strand" evidence="4">
    <location>
        <begin position="885"/>
        <end position="893"/>
    </location>
</feature>
<feature type="strand" evidence="5">
    <location>
        <begin position="900"/>
        <end position="902"/>
    </location>
</feature>
<feature type="strand" evidence="4">
    <location>
        <begin position="914"/>
        <end position="921"/>
    </location>
</feature>
<feature type="helix" evidence="4">
    <location>
        <begin position="928"/>
        <end position="939"/>
    </location>
</feature>
<feature type="helix" evidence="4">
    <location>
        <begin position="943"/>
        <end position="946"/>
    </location>
</feature>
<feature type="helix" evidence="4">
    <location>
        <begin position="948"/>
        <end position="954"/>
    </location>
</feature>
<feature type="turn" evidence="4">
    <location>
        <begin position="958"/>
        <end position="960"/>
    </location>
</feature>
<feature type="strand" evidence="4">
    <location>
        <begin position="971"/>
        <end position="979"/>
    </location>
</feature>
<feature type="helix" evidence="4">
    <location>
        <begin position="981"/>
        <end position="984"/>
    </location>
</feature>
<feature type="strand" evidence="4">
    <location>
        <begin position="1017"/>
        <end position="1025"/>
    </location>
</feature>
<feature type="strand" evidence="4">
    <location>
        <begin position="1028"/>
        <end position="1036"/>
    </location>
</feature>
<feature type="turn" evidence="4">
    <location>
        <begin position="1037"/>
        <end position="1039"/>
    </location>
</feature>
<feature type="helix" evidence="4">
    <location>
        <begin position="1042"/>
        <end position="1065"/>
    </location>
</feature>
<accession>P0C062</accession>
<accession>P14687</accession>